<accession>Q1MID1</accession>
<evidence type="ECO:0000255" key="1">
    <source>
        <dbReference type="HAMAP-Rule" id="MF_01367"/>
    </source>
</evidence>
<evidence type="ECO:0000305" key="2"/>
<feature type="chain" id="PRO_0000266538" description="Large ribosomal subunit protein uL14">
    <location>
        <begin position="1"/>
        <end position="122"/>
    </location>
</feature>
<proteinExistence type="inferred from homology"/>
<dbReference type="EMBL" id="AM236080">
    <property type="protein sequence ID" value="CAK07279.1"/>
    <property type="molecule type" value="Genomic_DNA"/>
</dbReference>
<dbReference type="RefSeq" id="WP_003547558.1">
    <property type="nucleotide sequence ID" value="NC_008380.1"/>
</dbReference>
<dbReference type="SMR" id="Q1MID1"/>
<dbReference type="EnsemblBacteria" id="CAK07279">
    <property type="protein sequence ID" value="CAK07279"/>
    <property type="gene ID" value="RL1784"/>
</dbReference>
<dbReference type="GeneID" id="67484973"/>
<dbReference type="KEGG" id="rle:RL1784"/>
<dbReference type="eggNOG" id="COG0093">
    <property type="taxonomic scope" value="Bacteria"/>
</dbReference>
<dbReference type="HOGENOM" id="CLU_095071_2_1_5"/>
<dbReference type="Proteomes" id="UP000006575">
    <property type="component" value="Chromosome"/>
</dbReference>
<dbReference type="GO" id="GO:0022625">
    <property type="term" value="C:cytosolic large ribosomal subunit"/>
    <property type="evidence" value="ECO:0007669"/>
    <property type="project" value="TreeGrafter"/>
</dbReference>
<dbReference type="GO" id="GO:0070180">
    <property type="term" value="F:large ribosomal subunit rRNA binding"/>
    <property type="evidence" value="ECO:0007669"/>
    <property type="project" value="TreeGrafter"/>
</dbReference>
<dbReference type="GO" id="GO:0003735">
    <property type="term" value="F:structural constituent of ribosome"/>
    <property type="evidence" value="ECO:0007669"/>
    <property type="project" value="InterPro"/>
</dbReference>
<dbReference type="GO" id="GO:0006412">
    <property type="term" value="P:translation"/>
    <property type="evidence" value="ECO:0007669"/>
    <property type="project" value="UniProtKB-UniRule"/>
</dbReference>
<dbReference type="CDD" id="cd00337">
    <property type="entry name" value="Ribosomal_uL14"/>
    <property type="match status" value="1"/>
</dbReference>
<dbReference type="FunFam" id="2.40.150.20:FF:000001">
    <property type="entry name" value="50S ribosomal protein L14"/>
    <property type="match status" value="1"/>
</dbReference>
<dbReference type="Gene3D" id="2.40.150.20">
    <property type="entry name" value="Ribosomal protein L14"/>
    <property type="match status" value="1"/>
</dbReference>
<dbReference type="HAMAP" id="MF_01367">
    <property type="entry name" value="Ribosomal_uL14"/>
    <property type="match status" value="1"/>
</dbReference>
<dbReference type="InterPro" id="IPR000218">
    <property type="entry name" value="Ribosomal_uL14"/>
</dbReference>
<dbReference type="InterPro" id="IPR005745">
    <property type="entry name" value="Ribosomal_uL14_bac-type"/>
</dbReference>
<dbReference type="InterPro" id="IPR019972">
    <property type="entry name" value="Ribosomal_uL14_CS"/>
</dbReference>
<dbReference type="InterPro" id="IPR036853">
    <property type="entry name" value="Ribosomal_uL14_sf"/>
</dbReference>
<dbReference type="NCBIfam" id="TIGR01067">
    <property type="entry name" value="rplN_bact"/>
    <property type="match status" value="1"/>
</dbReference>
<dbReference type="PANTHER" id="PTHR11761">
    <property type="entry name" value="50S/60S RIBOSOMAL PROTEIN L14/L23"/>
    <property type="match status" value="1"/>
</dbReference>
<dbReference type="PANTHER" id="PTHR11761:SF3">
    <property type="entry name" value="LARGE RIBOSOMAL SUBUNIT PROTEIN UL14M"/>
    <property type="match status" value="1"/>
</dbReference>
<dbReference type="Pfam" id="PF00238">
    <property type="entry name" value="Ribosomal_L14"/>
    <property type="match status" value="1"/>
</dbReference>
<dbReference type="SMART" id="SM01374">
    <property type="entry name" value="Ribosomal_L14"/>
    <property type="match status" value="1"/>
</dbReference>
<dbReference type="SUPFAM" id="SSF50193">
    <property type="entry name" value="Ribosomal protein L14"/>
    <property type="match status" value="1"/>
</dbReference>
<dbReference type="PROSITE" id="PS00049">
    <property type="entry name" value="RIBOSOMAL_L14"/>
    <property type="match status" value="1"/>
</dbReference>
<keyword id="KW-0687">Ribonucleoprotein</keyword>
<keyword id="KW-0689">Ribosomal protein</keyword>
<keyword id="KW-0694">RNA-binding</keyword>
<keyword id="KW-0699">rRNA-binding</keyword>
<name>RL14_RHIJ3</name>
<comment type="function">
    <text evidence="1">Binds to 23S rRNA. Forms part of two intersubunit bridges in the 70S ribosome.</text>
</comment>
<comment type="subunit">
    <text evidence="1">Part of the 50S ribosomal subunit. Forms a cluster with proteins L3 and L19. In the 70S ribosome, L14 and L19 interact and together make contacts with the 16S rRNA in bridges B5 and B8.</text>
</comment>
<comment type="similarity">
    <text evidence="1">Belongs to the universal ribosomal protein uL14 family.</text>
</comment>
<organism>
    <name type="scientific">Rhizobium johnstonii (strain DSM 114642 / LMG 32736 / 3841)</name>
    <name type="common">Rhizobium leguminosarum bv. viciae</name>
    <dbReference type="NCBI Taxonomy" id="216596"/>
    <lineage>
        <taxon>Bacteria</taxon>
        <taxon>Pseudomonadati</taxon>
        <taxon>Pseudomonadota</taxon>
        <taxon>Alphaproteobacteria</taxon>
        <taxon>Hyphomicrobiales</taxon>
        <taxon>Rhizobiaceae</taxon>
        <taxon>Rhizobium/Agrobacterium group</taxon>
        <taxon>Rhizobium</taxon>
        <taxon>Rhizobium johnstonii</taxon>
    </lineage>
</organism>
<protein>
    <recommendedName>
        <fullName evidence="1">Large ribosomal subunit protein uL14</fullName>
    </recommendedName>
    <alternativeName>
        <fullName evidence="2">50S ribosomal protein L14</fullName>
    </alternativeName>
</protein>
<gene>
    <name evidence="1" type="primary">rplN</name>
    <name type="ordered locus">RL1784</name>
</gene>
<reference key="1">
    <citation type="journal article" date="2006" name="Genome Biol.">
        <title>The genome of Rhizobium leguminosarum has recognizable core and accessory components.</title>
        <authorList>
            <person name="Young J.P.W."/>
            <person name="Crossman L.C."/>
            <person name="Johnston A.W.B."/>
            <person name="Thomson N.R."/>
            <person name="Ghazoui Z.F."/>
            <person name="Hull K.H."/>
            <person name="Wexler M."/>
            <person name="Curson A.R.J."/>
            <person name="Todd J.D."/>
            <person name="Poole P.S."/>
            <person name="Mauchline T.H."/>
            <person name="East A.K."/>
            <person name="Quail M.A."/>
            <person name="Churcher C."/>
            <person name="Arrowsmith C."/>
            <person name="Cherevach I."/>
            <person name="Chillingworth T."/>
            <person name="Clarke K."/>
            <person name="Cronin A."/>
            <person name="Davis P."/>
            <person name="Fraser A."/>
            <person name="Hance Z."/>
            <person name="Hauser H."/>
            <person name="Jagels K."/>
            <person name="Moule S."/>
            <person name="Mungall K."/>
            <person name="Norbertczak H."/>
            <person name="Rabbinowitsch E."/>
            <person name="Sanders M."/>
            <person name="Simmonds M."/>
            <person name="Whitehead S."/>
            <person name="Parkhill J."/>
        </authorList>
    </citation>
    <scope>NUCLEOTIDE SEQUENCE [LARGE SCALE GENOMIC DNA]</scope>
    <source>
        <strain>DSM 114642 / LMG 32736 / 3841</strain>
    </source>
</reference>
<sequence>MIQMQTNLDVADNSGARRVMCIKVLGGSKRKYASIGDVIVVSIKEAIPRGRVKKGDVMKAVVVRTAKDIRRADGSVIRFDTNAAVLIDNKKEPIGTRIFGPVPRELRAKNHMKIISLAPEVL</sequence>